<accession>Q98GG1</accession>
<name>FOSX_RHILO</name>
<proteinExistence type="evidence at protein level"/>
<gene>
    <name type="primary">fosX</name>
    <name type="ordered locus">mlr3345</name>
</gene>
<sequence>MIEGLSHMTFIVRDLERMTRILEGVFDAREVYASDTEQFSLSREKFFLIGDIWVAIMQGEKLAERSYNHIAFKIDDADFDRYAERVGKLGLDMRPPRPRVEGEGRSIYFYDDDNHMFELHTGTLTERLARKAKGLEAAQ</sequence>
<reference key="1">
    <citation type="journal article" date="2000" name="DNA Res.">
        <title>Complete genome structure of the nitrogen-fixing symbiotic bacterium Mesorhizobium loti.</title>
        <authorList>
            <person name="Kaneko T."/>
            <person name="Nakamura Y."/>
            <person name="Sato S."/>
            <person name="Asamizu E."/>
            <person name="Kato T."/>
            <person name="Sasamoto S."/>
            <person name="Watanabe A."/>
            <person name="Idesawa K."/>
            <person name="Ishikawa A."/>
            <person name="Kawashima K."/>
            <person name="Kimura T."/>
            <person name="Kishida Y."/>
            <person name="Kiyokawa C."/>
            <person name="Kohara M."/>
            <person name="Matsumoto M."/>
            <person name="Matsuno A."/>
            <person name="Mochizuki Y."/>
            <person name="Nakayama S."/>
            <person name="Nakazaki N."/>
            <person name="Shimpo S."/>
            <person name="Sugimoto M."/>
            <person name="Takeuchi C."/>
            <person name="Yamada M."/>
            <person name="Tabata S."/>
        </authorList>
    </citation>
    <scope>NUCLEOTIDE SEQUENCE [LARGE SCALE GENOMIC DNA]</scope>
    <source>
        <strain>LMG 29417 / CECT 9101 / MAFF 303099</strain>
    </source>
</reference>
<reference key="2">
    <citation type="journal article" date="2003" name="J. Am. Chem. Soc.">
        <title>Mechanistic diversity of fosfomycin resistance in pathogenic microorganisms.</title>
        <authorList>
            <person name="Fillgrove K.L."/>
            <person name="Pakhomova S."/>
            <person name="Newcomer M.E."/>
            <person name="Armstrong R.N."/>
        </authorList>
    </citation>
    <scope>X-RAY CRYSTALLOGRAPHY (1.83 ANGSTROMS)</scope>
    <scope>FUNCTION</scope>
    <scope>COFACTOR</scope>
    <scope>SUBUNIT</scope>
    <scope>MUTAGENESIS OF GLU-44</scope>
    <source>
        <strain>LMG 29417 / CECT 9101 / MAFF 303099</strain>
    </source>
</reference>
<keyword id="KW-0002">3D-structure</keyword>
<keyword id="KW-0046">Antibiotic resistance</keyword>
<keyword id="KW-0963">Cytoplasm</keyword>
<keyword id="KW-0464">Manganese</keyword>
<keyword id="KW-0479">Metal-binding</keyword>
<organism>
    <name type="scientific">Mesorhizobium japonicum (strain LMG 29417 / CECT 9101 / MAFF 303099)</name>
    <name type="common">Mesorhizobium loti (strain MAFF 303099)</name>
    <dbReference type="NCBI Taxonomy" id="266835"/>
    <lineage>
        <taxon>Bacteria</taxon>
        <taxon>Pseudomonadati</taxon>
        <taxon>Pseudomonadota</taxon>
        <taxon>Alphaproteobacteria</taxon>
        <taxon>Hyphomicrobiales</taxon>
        <taxon>Phyllobacteriaceae</taxon>
        <taxon>Mesorhizobium</taxon>
    </lineage>
</organism>
<feature type="chain" id="PRO_0000164047" description="Fosfomycin resistance protein FosX">
    <location>
        <begin position="1"/>
        <end position="139"/>
    </location>
</feature>
<feature type="domain" description="VOC" evidence="2">
    <location>
        <begin position="4"/>
        <end position="122"/>
    </location>
</feature>
<feature type="active site" description="Proton acceptor" evidence="4">
    <location>
        <position position="44"/>
    </location>
</feature>
<feature type="binding site">
    <location>
        <position position="7"/>
    </location>
    <ligand>
        <name>Mn(2+)</name>
        <dbReference type="ChEBI" id="CHEBI:29035"/>
    </ligand>
</feature>
<feature type="binding site">
    <location>
        <position position="69"/>
    </location>
    <ligand>
        <name>Mn(2+)</name>
        <dbReference type="ChEBI" id="CHEBI:29035"/>
    </ligand>
</feature>
<feature type="binding site">
    <location>
        <position position="118"/>
    </location>
    <ligand>
        <name>Mn(2+)</name>
        <dbReference type="ChEBI" id="CHEBI:29035"/>
    </ligand>
</feature>
<feature type="mutagenesis site" description="Decrease in activity." evidence="3">
    <original>E</original>
    <variation>G</variation>
    <location>
        <position position="44"/>
    </location>
</feature>
<feature type="strand" evidence="5">
    <location>
        <begin position="2"/>
        <end position="13"/>
    </location>
</feature>
<feature type="helix" evidence="5">
    <location>
        <begin position="15"/>
        <end position="26"/>
    </location>
</feature>
<feature type="strand" evidence="5">
    <location>
        <begin position="29"/>
        <end position="33"/>
    </location>
</feature>
<feature type="helix" evidence="5">
    <location>
        <begin position="34"/>
        <end position="36"/>
    </location>
</feature>
<feature type="strand" evidence="5">
    <location>
        <begin position="44"/>
        <end position="49"/>
    </location>
</feature>
<feature type="strand" evidence="5">
    <location>
        <begin position="52"/>
        <end position="58"/>
    </location>
</feature>
<feature type="strand" evidence="5">
    <location>
        <begin position="69"/>
        <end position="73"/>
    </location>
</feature>
<feature type="helix" evidence="5">
    <location>
        <begin position="76"/>
        <end position="78"/>
    </location>
</feature>
<feature type="helix" evidence="5">
    <location>
        <begin position="79"/>
        <end position="89"/>
    </location>
</feature>
<feature type="strand" evidence="5">
    <location>
        <begin position="106"/>
        <end position="110"/>
    </location>
</feature>
<feature type="strand" evidence="5">
    <location>
        <begin position="116"/>
        <end position="120"/>
    </location>
</feature>
<feature type="helix" evidence="5">
    <location>
        <begin position="124"/>
        <end position="129"/>
    </location>
</feature>
<dbReference type="EMBL" id="BA000012">
    <property type="protein sequence ID" value="BAB50255.1"/>
    <property type="molecule type" value="Genomic_DNA"/>
</dbReference>
<dbReference type="RefSeq" id="WP_010911601.1">
    <property type="nucleotide sequence ID" value="NC_002678.2"/>
</dbReference>
<dbReference type="PDB" id="1R9C">
    <property type="method" value="X-ray"/>
    <property type="resolution" value="1.83 A"/>
    <property type="chains" value="A/B=1-139"/>
</dbReference>
<dbReference type="PDBsum" id="1R9C"/>
<dbReference type="SMR" id="Q98GG1"/>
<dbReference type="KEGG" id="mlo:mlr3345"/>
<dbReference type="PATRIC" id="fig|266835.9.peg.2664"/>
<dbReference type="eggNOG" id="COG0346">
    <property type="taxonomic scope" value="Bacteria"/>
</dbReference>
<dbReference type="HOGENOM" id="CLU_121356_1_0_5"/>
<dbReference type="EvolutionaryTrace" id="Q98GG1"/>
<dbReference type="Proteomes" id="UP000000552">
    <property type="component" value="Chromosome"/>
</dbReference>
<dbReference type="GO" id="GO:0005737">
    <property type="term" value="C:cytoplasm"/>
    <property type="evidence" value="ECO:0007669"/>
    <property type="project" value="UniProtKB-SubCell"/>
</dbReference>
<dbReference type="GO" id="GO:0046872">
    <property type="term" value="F:metal ion binding"/>
    <property type="evidence" value="ECO:0007669"/>
    <property type="project" value="UniProtKB-KW"/>
</dbReference>
<dbReference type="GO" id="GO:0046677">
    <property type="term" value="P:response to antibiotic"/>
    <property type="evidence" value="ECO:0007669"/>
    <property type="project" value="UniProtKB-KW"/>
</dbReference>
<dbReference type="CDD" id="cd08364">
    <property type="entry name" value="FosX"/>
    <property type="match status" value="1"/>
</dbReference>
<dbReference type="Gene3D" id="3.10.180.10">
    <property type="entry name" value="2,3-Dihydroxybiphenyl 1,2-Dioxygenase, domain 1"/>
    <property type="match status" value="1"/>
</dbReference>
<dbReference type="InterPro" id="IPR051332">
    <property type="entry name" value="Fosfomycin_Res_Enzymes"/>
</dbReference>
<dbReference type="InterPro" id="IPR037434">
    <property type="entry name" value="FosX"/>
</dbReference>
<dbReference type="InterPro" id="IPR029068">
    <property type="entry name" value="Glyas_Bleomycin-R_OHBP_Dase"/>
</dbReference>
<dbReference type="InterPro" id="IPR004360">
    <property type="entry name" value="Glyas_Fos-R_dOase_dom"/>
</dbReference>
<dbReference type="InterPro" id="IPR037523">
    <property type="entry name" value="VOC"/>
</dbReference>
<dbReference type="NCBIfam" id="NF000222">
    <property type="entry name" value="FosX"/>
    <property type="match status" value="1"/>
</dbReference>
<dbReference type="PANTHER" id="PTHR36113:SF6">
    <property type="entry name" value="FOSFOMYCIN RESISTANCE PROTEIN FOSX"/>
    <property type="match status" value="1"/>
</dbReference>
<dbReference type="PANTHER" id="PTHR36113">
    <property type="entry name" value="LYASE, PUTATIVE-RELATED-RELATED"/>
    <property type="match status" value="1"/>
</dbReference>
<dbReference type="Pfam" id="PF00903">
    <property type="entry name" value="Glyoxalase"/>
    <property type="match status" value="1"/>
</dbReference>
<dbReference type="SUPFAM" id="SSF54593">
    <property type="entry name" value="Glyoxalase/Bleomycin resistance protein/Dihydroxybiphenyl dioxygenase"/>
    <property type="match status" value="1"/>
</dbReference>
<dbReference type="PROSITE" id="PS51819">
    <property type="entry name" value="VOC"/>
    <property type="match status" value="1"/>
</dbReference>
<comment type="function">
    <text evidence="3">Catalyzes the hydration of fosfomycin.</text>
</comment>
<comment type="cofactor">
    <cofactor evidence="3">
        <name>Mn(2+)</name>
        <dbReference type="ChEBI" id="CHEBI:29035"/>
    </cofactor>
</comment>
<comment type="subunit">
    <text evidence="3">Homodimer.</text>
</comment>
<comment type="subcellular location">
    <subcellularLocation>
        <location evidence="1">Cytoplasm</location>
    </subcellularLocation>
</comment>
<comment type="similarity">
    <text evidence="4">Belongs to the fosfomycin resistance protein family.</text>
</comment>
<evidence type="ECO:0000250" key="1"/>
<evidence type="ECO:0000255" key="2">
    <source>
        <dbReference type="PROSITE-ProRule" id="PRU01163"/>
    </source>
</evidence>
<evidence type="ECO:0000269" key="3">
    <source>
    </source>
</evidence>
<evidence type="ECO:0000305" key="4"/>
<evidence type="ECO:0007829" key="5">
    <source>
        <dbReference type="PDB" id="1R9C"/>
    </source>
</evidence>
<protein>
    <recommendedName>
        <fullName>Fosfomycin resistance protein FosX</fullName>
    </recommendedName>
</protein>